<feature type="chain" id="PRO_0000403357" description="Peroxisome biogenesis protein 5">
    <location>
        <begin position="1"/>
        <end position="728"/>
    </location>
</feature>
<feature type="repeat" description="1">
    <location>
        <begin position="240"/>
        <end position="244"/>
    </location>
</feature>
<feature type="repeat" description="2">
    <location>
        <begin position="257"/>
        <end position="261"/>
    </location>
</feature>
<feature type="repeat" description="3">
    <location>
        <begin position="270"/>
        <end position="274"/>
    </location>
</feature>
<feature type="repeat" description="4">
    <location>
        <begin position="348"/>
        <end position="352"/>
    </location>
</feature>
<feature type="repeat" description="5">
    <location>
        <begin position="362"/>
        <end position="366"/>
    </location>
</feature>
<feature type="repeat" description="6">
    <location>
        <begin position="378"/>
        <end position="382"/>
    </location>
</feature>
<feature type="repeat" description="7">
    <location>
        <begin position="396"/>
        <end position="400"/>
    </location>
</feature>
<feature type="repeat" description="8">
    <location>
        <begin position="408"/>
        <end position="412"/>
    </location>
</feature>
<feature type="repeat" description="9">
    <location>
        <begin position="425"/>
        <end position="429"/>
    </location>
</feature>
<feature type="repeat" description="TPR 1">
    <location>
        <begin position="491"/>
        <end position="524"/>
    </location>
</feature>
<feature type="repeat" description="TPR 2">
    <location>
        <begin position="590"/>
        <end position="623"/>
    </location>
</feature>
<feature type="repeat" description="TPR 3">
    <location>
        <begin position="625"/>
        <end position="657"/>
    </location>
</feature>
<feature type="repeat" description="TPR 4">
    <location>
        <begin position="658"/>
        <end position="691"/>
    </location>
</feature>
<feature type="region of interest" description="Disordered" evidence="4">
    <location>
        <begin position="1"/>
        <end position="58"/>
    </location>
</feature>
<feature type="region of interest" description="Amphipathic helix 1 (AH1)" evidence="1">
    <location>
        <begin position="11"/>
        <end position="97"/>
    </location>
</feature>
<feature type="region of interest" description="Amphipathic helix 3 (AH3)" evidence="1">
    <location>
        <begin position="288"/>
        <end position="311"/>
    </location>
</feature>
<feature type="region of interest" description="Amphipathic helix 4 (AH4)" evidence="1">
    <location>
        <begin position="392"/>
        <end position="417"/>
    </location>
</feature>
<feature type="short sequence motif" description="WxxxF/Y motif 1" evidence="9">
    <location>
        <begin position="240"/>
        <end position="244"/>
    </location>
</feature>
<feature type="short sequence motif" description="WxxxF/Y motif 2" evidence="9">
    <location>
        <begin position="257"/>
        <end position="261"/>
    </location>
</feature>
<feature type="short sequence motif" description="WxxxF/Y motif 3" evidence="9">
    <location>
        <begin position="270"/>
        <end position="274"/>
    </location>
</feature>
<feature type="short sequence motif" description="WxxxF/Y motif 4" evidence="9">
    <location>
        <begin position="348"/>
        <end position="352"/>
    </location>
</feature>
<feature type="short sequence motif" description="WxxxF/Y motif 5" evidence="9">
    <location>
        <begin position="362"/>
        <end position="366"/>
    </location>
</feature>
<feature type="short sequence motif" description="WxxxF/Y motif 6" evidence="9">
    <location>
        <begin position="378"/>
        <end position="382"/>
    </location>
</feature>
<feature type="short sequence motif" description="WxxxF/Y motif 7" evidence="9">
    <location>
        <begin position="396"/>
        <end position="400"/>
    </location>
</feature>
<feature type="short sequence motif" description="WxxxF/Y motif 8" evidence="9">
    <location>
        <begin position="408"/>
        <end position="412"/>
    </location>
</feature>
<feature type="short sequence motif" description="WxxxF/Y motif 9" evidence="9">
    <location>
        <begin position="425"/>
        <end position="429"/>
    </location>
</feature>
<feature type="cross-link" description="Glycyl cysteine thioester (Cys-Gly) (interchain with G-Cter in ubiquitin)" evidence="3">
    <location>
        <position position="13"/>
    </location>
</feature>
<feature type="mutagenesis site" description="In pex5-10; loss of import of both PTS1- and PTS2-containing proteins." evidence="16">
    <location>
        <begin position="128"/>
        <end position="191"/>
    </location>
</feature>
<feature type="mutagenesis site" description="In pex5-1; reduced sensitivity to exogenous indole-3-butyric acid (IBA), loss of PTS2-containing proteins import, but no effect on PTS1-containing proteins import." evidence="5">
    <original>S</original>
    <variation>L</variation>
    <location>
        <position position="318"/>
    </location>
</feature>
<feature type="mutagenesis site" description="Loss of interaction with PTS1-containing proteins, reduced interaction with PEX14 and no effect on interaction with PEX7." evidence="9">
    <location>
        <begin position="658"/>
        <end position="728"/>
    </location>
</feature>
<feature type="sequence conflict" description="In Ref. 1; AAC62012." evidence="17" ref="1">
    <original>YHAD</original>
    <variation>FHAE</variation>
    <location>
        <begin position="571"/>
        <end position="574"/>
    </location>
</feature>
<name>PEX5_ARATH</name>
<reference key="1">
    <citation type="online journal article" date="1998" name="Plant Gene Register">
        <title>Sequence analysis of a cDNA encoding Pex5p, a peroxisomal targeting signal type 1 receptor from Arabidopsis thaliana.</title>
        <authorList>
            <person name="Brickner D.G."/>
            <person name="Brickner J.H."/>
            <person name="Olsen L.J."/>
        </authorList>
        <locator>PGR98-154</locator>
    </citation>
    <scope>NUCLEOTIDE SEQUENCE [MRNA]</scope>
</reference>
<reference key="2">
    <citation type="journal article" date="1998" name="DNA Res.">
        <title>Structural analysis of Arabidopsis thaliana chromosome 5. IV. Sequence features of the regions of 1,456,315 bp covered by nineteen physically assigned P1 and TAC clones.</title>
        <authorList>
            <person name="Sato S."/>
            <person name="Kaneko T."/>
            <person name="Kotani H."/>
            <person name="Nakamura Y."/>
            <person name="Asamizu E."/>
            <person name="Miyajima N."/>
            <person name="Tabata S."/>
        </authorList>
    </citation>
    <scope>NUCLEOTIDE SEQUENCE [LARGE SCALE GENOMIC DNA]</scope>
    <source>
        <strain>cv. Columbia</strain>
    </source>
</reference>
<reference key="3">
    <citation type="submission" date="1999-05" db="EMBL/GenBank/DDBJ databases">
        <title>Structural analysis of Arabidopsis thaliana chromosome 5. XI.</title>
        <authorList>
            <person name="Kaneko T."/>
            <person name="Katoh T."/>
            <person name="Asamizu E."/>
            <person name="Sato S."/>
            <person name="Nakamura Y."/>
            <person name="Kotani H."/>
            <person name="Tabata S."/>
        </authorList>
    </citation>
    <scope>NUCLEOTIDE SEQUENCE [LARGE SCALE GENOMIC DNA]</scope>
    <source>
        <strain>cv. Columbia</strain>
    </source>
</reference>
<reference key="4">
    <citation type="journal article" date="2017" name="Plant J.">
        <title>Araport11: a complete reannotation of the Arabidopsis thaliana reference genome.</title>
        <authorList>
            <person name="Cheng C.Y."/>
            <person name="Krishnakumar V."/>
            <person name="Chan A.P."/>
            <person name="Thibaud-Nissen F."/>
            <person name="Schobel S."/>
            <person name="Town C.D."/>
        </authorList>
    </citation>
    <scope>GENOME REANNOTATION</scope>
    <source>
        <strain>cv. Columbia</strain>
    </source>
</reference>
<reference key="5">
    <citation type="journal article" date="2003" name="Science">
        <title>Empirical analysis of transcriptional activity in the Arabidopsis genome.</title>
        <authorList>
            <person name="Yamada K."/>
            <person name="Lim J."/>
            <person name="Dale J.M."/>
            <person name="Chen H."/>
            <person name="Shinn P."/>
            <person name="Palm C.J."/>
            <person name="Southwick A.M."/>
            <person name="Wu H.C."/>
            <person name="Kim C.J."/>
            <person name="Nguyen M."/>
            <person name="Pham P.K."/>
            <person name="Cheuk R.F."/>
            <person name="Karlin-Newmann G."/>
            <person name="Liu S.X."/>
            <person name="Lam B."/>
            <person name="Sakano H."/>
            <person name="Wu T."/>
            <person name="Yu G."/>
            <person name="Miranda M."/>
            <person name="Quach H.L."/>
            <person name="Tripp M."/>
            <person name="Chang C.H."/>
            <person name="Lee J.M."/>
            <person name="Toriumi M.J."/>
            <person name="Chan M.M."/>
            <person name="Tang C.C."/>
            <person name="Onodera C.S."/>
            <person name="Deng J.M."/>
            <person name="Akiyama K."/>
            <person name="Ansari Y."/>
            <person name="Arakawa T."/>
            <person name="Banh J."/>
            <person name="Banno F."/>
            <person name="Bowser L."/>
            <person name="Brooks S.Y."/>
            <person name="Carninci P."/>
            <person name="Chao Q."/>
            <person name="Choy N."/>
            <person name="Enju A."/>
            <person name="Goldsmith A.D."/>
            <person name="Gurjal M."/>
            <person name="Hansen N.F."/>
            <person name="Hayashizaki Y."/>
            <person name="Johnson-Hopson C."/>
            <person name="Hsuan V.W."/>
            <person name="Iida K."/>
            <person name="Karnes M."/>
            <person name="Khan S."/>
            <person name="Koesema E."/>
            <person name="Ishida J."/>
            <person name="Jiang P.X."/>
            <person name="Jones T."/>
            <person name="Kawai J."/>
            <person name="Kamiya A."/>
            <person name="Meyers C."/>
            <person name="Nakajima M."/>
            <person name="Narusaka M."/>
            <person name="Seki M."/>
            <person name="Sakurai T."/>
            <person name="Satou M."/>
            <person name="Tamse R."/>
            <person name="Vaysberg M."/>
            <person name="Wallender E.K."/>
            <person name="Wong C."/>
            <person name="Yamamura Y."/>
            <person name="Yuan S."/>
            <person name="Shinozaki K."/>
            <person name="Davis R.W."/>
            <person name="Theologis A."/>
            <person name="Ecker J.R."/>
        </authorList>
    </citation>
    <scope>NUCLEOTIDE SEQUENCE [LARGE SCALE MRNA]</scope>
    <source>
        <strain>cv. Columbia</strain>
    </source>
</reference>
<reference key="6">
    <citation type="journal article" date="2000" name="EMBO J.">
        <title>Stress induces peroxisome biogenesis genes.</title>
        <authorList>
            <person name="Lopez-Huertas E."/>
            <person name="Charlton W.L."/>
            <person name="Johnson B."/>
            <person name="Graham I.A."/>
            <person name="Baker A."/>
        </authorList>
    </citation>
    <scope>INDUCTION BY HYDROGEN PEROXIDE</scope>
    <scope>DEVELOPMENTAL STAGE</scope>
    <source>
        <strain>cv. Columbia</strain>
    </source>
</reference>
<reference key="7">
    <citation type="journal article" date="2000" name="Genetics">
        <title>Genetic analysis of indole-3-butyric acid responses in Arabidopsis thaliana reveals four mutant classes.</title>
        <authorList>
            <person name="Zolman B.K."/>
            <person name="Yoder A."/>
            <person name="Bartel B."/>
        </authorList>
    </citation>
    <scope>MUTAGENESIS OF SER-318</scope>
</reference>
<reference key="8">
    <citation type="journal article" date="2002" name="Plant Cell Physiol.">
        <title>Direct interaction and determination of binding domains among peroxisomal import factors in Arabidopsis thaliana.</title>
        <authorList>
            <person name="Nito K."/>
            <person name="Hayashi M."/>
            <person name="Nishimura M."/>
        </authorList>
    </citation>
    <scope>FUNCTION</scope>
    <scope>INTERACTION WITH PEX7 AND PEX14</scope>
    <scope>TISSUE SPECIFICITY</scope>
    <scope>DEVELOPMENTAL STAGE</scope>
</reference>
<reference key="9">
    <citation type="journal article" date="2005" name="Arch. Biochem. Biophys.">
        <title>AtLACS7 interacts with the TPR domains of the PTS1 receptor PEX5.</title>
        <authorList>
            <person name="Bonsegna S."/>
            <person name="Slocombe S.P."/>
            <person name="De Bellis L."/>
            <person name="Baker A."/>
        </authorList>
    </citation>
    <scope>INTERACTION WITH LACS7</scope>
</reference>
<reference key="10">
    <citation type="journal article" date="2005" name="J. Biol. Chem.">
        <title>Differential contribution of two peroxisomal protein receptors to the maintenance of peroxisomal functions in Arabidopsis.</title>
        <authorList>
            <person name="Hayashi M."/>
            <person name="Yagi M."/>
            <person name="Nito K."/>
            <person name="Kamada T."/>
            <person name="Nishimura M."/>
        </authorList>
    </citation>
    <scope>FUNCTION</scope>
    <scope>INTERACTION WITH PEX7; PEX14 AND PTS1-CONTAINING PROTEINS</scope>
    <scope>MUTAGENESIS OF 658-VAL--LEU-728</scope>
</reference>
<reference key="11">
    <citation type="journal article" date="2005" name="Mol. Biol. Cell">
        <title>The Arabidopsis peroxisomal targeting signal type 2 receptor PEX7 is necessary for peroxisome function and dependent on PEX5.</title>
        <authorList>
            <person name="Woodward A.W."/>
            <person name="Bartel B."/>
        </authorList>
    </citation>
    <scope>FUNCTION</scope>
</reference>
<reference key="12">
    <citation type="journal article" date="2005" name="Plant Cell">
        <title>Identification and functional characterization of Arabidopsis PEROXIN4 and the interacting protein PEROXIN22.</title>
        <authorList>
            <person name="Zolman B.K."/>
            <person name="Monroe-Augustus M."/>
            <person name="Silva I.D."/>
            <person name="Bartel B."/>
        </authorList>
    </citation>
    <scope>DISRUPTION PHENOTYPE</scope>
</reference>
<reference key="13">
    <citation type="journal article" date="2006" name="Plant J.">
        <title>The Arabidopsis pex12 and pex13 mutants are defective in both PTS1- and PTS2-dependent protein transport to peroxisomes.</title>
        <authorList>
            <person name="Mano S."/>
            <person name="Nakamori C."/>
            <person name="Nito K."/>
            <person name="Kondo M."/>
            <person name="Nishimura M."/>
        </authorList>
    </citation>
    <scope>SUBCELLULAR LOCATION</scope>
</reference>
<reference key="14">
    <citation type="journal article" date="2007" name="Plant Cell Physiol.">
        <title>Functional classification of Arabidopsis peroxisome biogenesis factors proposed from analyses of knockdown mutants.</title>
        <authorList>
            <person name="Nito K."/>
            <person name="Kamigaki A."/>
            <person name="Kondo M."/>
            <person name="Hayashi M."/>
            <person name="Nishimura M."/>
        </authorList>
    </citation>
    <scope>FUNCTION</scope>
</reference>
<reference key="15">
    <citation type="journal article" date="2009" name="Proc. Natl. Acad. Sci. U.S.A.">
        <title>Peroxisome-associated matrix protein degradation in Arabidopsis.</title>
        <authorList>
            <person name="Lingard M.J."/>
            <person name="Monroe-Augustus M."/>
            <person name="Bartel B."/>
        </authorList>
    </citation>
    <scope>FUNCTION</scope>
</reference>
<reference key="16">
    <citation type="journal article" date="2010" name="Mol. Biol. Cell">
        <title>Interdependence of the peroxisome-targeting receptors in Arabidopsis thaliana: PEX7 facilitates PEX5 accumulation and import of PTS1 cargo into peroxisomes.</title>
        <authorList>
            <person name="Ramon N.M."/>
            <person name="Bartel B."/>
        </authorList>
    </citation>
    <scope>FUNCTION</scope>
    <scope>INTERACTION WITH PEX7</scope>
</reference>
<reference key="17">
    <citation type="journal article" date="2010" name="Plant Physiol.">
        <title>pex5 mutants that differentially disrupt PTS1 and PTS2 peroxisomal matrix protein import in Arabidopsis.</title>
        <authorList>
            <person name="Khan B.R."/>
            <person name="Zolman B.K."/>
        </authorList>
    </citation>
    <scope>FUNCTION</scope>
    <scope>DEVELOPMENTAL STAGE</scope>
    <scope>INDUCTION BY LIGHT AND SUCROSE</scope>
    <scope>MUTAGENESIS OF 128-GLY--SER-191</scope>
</reference>
<proteinExistence type="evidence at protein level"/>
<keyword id="KW-0963">Cytoplasm</keyword>
<keyword id="KW-0576">Peroxisome</keyword>
<keyword id="KW-0962">Peroxisome biogenesis</keyword>
<keyword id="KW-0653">Protein transport</keyword>
<keyword id="KW-0675">Receptor</keyword>
<keyword id="KW-1185">Reference proteome</keyword>
<keyword id="KW-0677">Repeat</keyword>
<keyword id="KW-0882">Thioester bond</keyword>
<keyword id="KW-0802">TPR repeat</keyword>
<keyword id="KW-0811">Translocation</keyword>
<keyword id="KW-0813">Transport</keyword>
<keyword id="KW-0832">Ubl conjugation</keyword>
<sequence>MAMRDLVNGGAACAVPGSSSSSNPLGALTNALLGSSSKTQERLKEIPNANRSGPRPQFYSEDQQIRSLPGSELDQPLLQPGAQGSEFFRGFRSVDQNGLGAAWDEVQQGGPMPPMGPMFEPVQPTFEGPPQRVLSNFLHSFVESSRGGIPFRPAPVPVLGLSQSDKQCIRDRSSIMARHFFADRGEEFINSQVNALLSSLDIDDGIQARGHVPGRFRELDDYWNESQAVVKPNLHPADNWAAEFNQHGMDHGGPDSWVQSFEQQHGVNGWATEFEQGQSQLMSSQMRSMDMQNIAAMEQTRKLAHTLSQDGNPKFQNSRFLQFVSKMSRGELIIDENQVKQASAPGEWATEYEQQYLGPPSWADQFANEKLSHGPEQWADEFASGRGQQETAEDQWVNEFSKLNVDDWIDEFAEGPVGDSSADAWANAYDEFLNEKNAGKQTSGVYVFSDMNPYVGHPEPMKEGQELFRKGLLSEAALALEAEVMKNPENAEGWRLLGVTHAENDDDQQAIAAMMRAQEADPTNLEVLLALGVSHTNELEQATALKYLYGWLRNHPKYGAIAPPELADSLYHADIARLFNEASQLNPEDADVHIVLGVLYNLSREFDRAITSFQTALQLKPNDYSLWNKLGATQANSVQSADAISAYQQALDLKPNYVRAWANMGISYANQGMYKESIPYYVRALAMNPKADNAWQYLRLSLSCASRQDMIEACESRNLDLLQKEFPL</sequence>
<dbReference type="EMBL" id="AF074843">
    <property type="protein sequence ID" value="AAC62012.1"/>
    <property type="molecule type" value="mRNA"/>
</dbReference>
<dbReference type="EMBL" id="AB009049">
    <property type="protein sequence ID" value="BAB11256.1"/>
    <property type="molecule type" value="Genomic_DNA"/>
</dbReference>
<dbReference type="EMBL" id="AB026656">
    <property type="protein sequence ID" value="BAB11256.1"/>
    <property type="status" value="JOINED"/>
    <property type="molecule type" value="Genomic_DNA"/>
</dbReference>
<dbReference type="EMBL" id="CP002688">
    <property type="protein sequence ID" value="AED96745.1"/>
    <property type="molecule type" value="Genomic_DNA"/>
</dbReference>
<dbReference type="EMBL" id="AY056299">
    <property type="protein sequence ID" value="AAL07148.1"/>
    <property type="molecule type" value="mRNA"/>
</dbReference>
<dbReference type="EMBL" id="AY096679">
    <property type="protein sequence ID" value="AAM20313.1"/>
    <property type="molecule type" value="mRNA"/>
</dbReference>
<dbReference type="PIR" id="T51817">
    <property type="entry name" value="T51817"/>
</dbReference>
<dbReference type="RefSeq" id="NP_200440.1">
    <property type="nucleotide sequence ID" value="NM_125012.5"/>
</dbReference>
<dbReference type="SMR" id="Q9FMA3"/>
<dbReference type="BioGRID" id="20972">
    <property type="interactions" value="17"/>
</dbReference>
<dbReference type="ELM" id="Q9FMA3"/>
<dbReference type="FunCoup" id="Q9FMA3">
    <property type="interactions" value="837"/>
</dbReference>
<dbReference type="IntAct" id="Q9FMA3">
    <property type="interactions" value="16"/>
</dbReference>
<dbReference type="MINT" id="Q9FMA3"/>
<dbReference type="STRING" id="3702.Q9FMA3"/>
<dbReference type="TCDB" id="3.A.20.1.2">
    <property type="family name" value="the peroxisomal protein importer (ppi) family"/>
</dbReference>
<dbReference type="iPTMnet" id="Q9FMA3"/>
<dbReference type="PaxDb" id="3702-AT5G56290.1"/>
<dbReference type="ProteomicsDB" id="251018"/>
<dbReference type="EnsemblPlants" id="AT5G56290.1">
    <property type="protein sequence ID" value="AT5G56290.1"/>
    <property type="gene ID" value="AT5G56290"/>
</dbReference>
<dbReference type="GeneID" id="835728"/>
<dbReference type="Gramene" id="AT5G56290.1">
    <property type="protein sequence ID" value="AT5G56290.1"/>
    <property type="gene ID" value="AT5G56290"/>
</dbReference>
<dbReference type="KEGG" id="ath:AT5G56290"/>
<dbReference type="Araport" id="AT5G56290"/>
<dbReference type="TAIR" id="AT5G56290">
    <property type="gene designation" value="PEX5"/>
</dbReference>
<dbReference type="eggNOG" id="KOG1125">
    <property type="taxonomic scope" value="Eukaryota"/>
</dbReference>
<dbReference type="HOGENOM" id="CLU_021069_0_0_1"/>
<dbReference type="InParanoid" id="Q9FMA3"/>
<dbReference type="OMA" id="NYRMKGP"/>
<dbReference type="PhylomeDB" id="Q9FMA3"/>
<dbReference type="PRO" id="PR:Q9FMA3"/>
<dbReference type="Proteomes" id="UP000006548">
    <property type="component" value="Chromosome 5"/>
</dbReference>
<dbReference type="ExpressionAtlas" id="Q9FMA3">
    <property type="expression patterns" value="baseline and differential"/>
</dbReference>
<dbReference type="GO" id="GO:0005829">
    <property type="term" value="C:cytosol"/>
    <property type="evidence" value="ECO:0007669"/>
    <property type="project" value="UniProtKB-SubCell"/>
</dbReference>
<dbReference type="GO" id="GO:0005782">
    <property type="term" value="C:peroxisomal matrix"/>
    <property type="evidence" value="ECO:0007669"/>
    <property type="project" value="UniProtKB-SubCell"/>
</dbReference>
<dbReference type="GO" id="GO:0009536">
    <property type="term" value="C:plastid"/>
    <property type="evidence" value="ECO:0007005"/>
    <property type="project" value="TAIR"/>
</dbReference>
<dbReference type="GO" id="GO:0006625">
    <property type="term" value="P:protein targeting to peroxisome"/>
    <property type="evidence" value="ECO:0000316"/>
    <property type="project" value="TAIR"/>
</dbReference>
<dbReference type="GO" id="GO:0015031">
    <property type="term" value="P:protein transport"/>
    <property type="evidence" value="ECO:0007669"/>
    <property type="project" value="UniProtKB-KW"/>
</dbReference>
<dbReference type="GO" id="GO:0009733">
    <property type="term" value="P:response to auxin"/>
    <property type="evidence" value="ECO:0000315"/>
    <property type="project" value="TAIR"/>
</dbReference>
<dbReference type="FunFam" id="1.25.40.10:FF:000110">
    <property type="entry name" value="Peroxisome biogenesis protein 5"/>
    <property type="match status" value="1"/>
</dbReference>
<dbReference type="Gene3D" id="1.25.40.10">
    <property type="entry name" value="Tetratricopeptide repeat domain"/>
    <property type="match status" value="1"/>
</dbReference>
<dbReference type="InterPro" id="IPR024111">
    <property type="entry name" value="PEX5/PEX5L"/>
</dbReference>
<dbReference type="InterPro" id="IPR011990">
    <property type="entry name" value="TPR-like_helical_dom_sf"/>
</dbReference>
<dbReference type="InterPro" id="IPR019734">
    <property type="entry name" value="TPR_rpt"/>
</dbReference>
<dbReference type="PANTHER" id="PTHR10130:SF0">
    <property type="entry name" value="GH08708P"/>
    <property type="match status" value="1"/>
</dbReference>
<dbReference type="PANTHER" id="PTHR10130">
    <property type="entry name" value="PEROXISOMAL TARGETING SIGNAL 1 RECEPTOR PEX5"/>
    <property type="match status" value="1"/>
</dbReference>
<dbReference type="Pfam" id="PF00515">
    <property type="entry name" value="TPR_1"/>
    <property type="match status" value="1"/>
</dbReference>
<dbReference type="Pfam" id="PF13432">
    <property type="entry name" value="TPR_16"/>
    <property type="match status" value="2"/>
</dbReference>
<dbReference type="SMART" id="SM00028">
    <property type="entry name" value="TPR"/>
    <property type="match status" value="4"/>
</dbReference>
<dbReference type="SUPFAM" id="SSF48452">
    <property type="entry name" value="TPR-like"/>
    <property type="match status" value="1"/>
</dbReference>
<dbReference type="PROSITE" id="PS50005">
    <property type="entry name" value="TPR"/>
    <property type="match status" value="4"/>
</dbReference>
<dbReference type="PROSITE" id="PS50293">
    <property type="entry name" value="TPR_REGION"/>
    <property type="match status" value="1"/>
</dbReference>
<comment type="function">
    <text evidence="1 3 7 8 9 13 14 15 16">Receptor that mediates peroxisomal import of proteins containing a C-terminal PTS1-type tripeptide peroxisomal targeting signal (SKL-type) (PubMed:17478547, PubMed:19246395, PubMed:20974890). Binds to cargo proteins containing a PTS1 peroxisomal targeting signal in the cytosol, and translocates them into the peroxisome matrix by passing through the PEX13-PEX14 docking complex along with cargo proteins (PubMed:11978862, PubMed:15637057). PEX5 receptor is then retrotranslocated into the cytosol, leading to release of bound cargo in the peroxisome matrix, and reset for a subsequent peroxisome import cycle (By similarity). In addition to promoting peroxisomal translocation of proteins containing a PTS1 peroxisomal targeting signal, mediates peroxisomal import of proteins containing a C-terminal PTS2-type peroxisomal targeting signal via its interaction with PEX7 (PubMed:11978862, PubMed:15548601, PubMed:15637057, PubMed:20130089, PubMed:20974890). Interaction with PEX7 only takes place when PEX7 is associated with cargo proteins containing a PTS2 peroxisomal targeting signal (By similarity). PEX7 along with PTS2-containing cargo proteins are then translocated through the PEX13-PEX14 docking complex together with PEX5 (By similarity). Necessary for the developmental elimination of obsolete peroxisome matrix proteins (PubMed:19246395).</text>
</comment>
<comment type="subunit">
    <text evidence="7 9 10 15">Interacts (via WxxxF/Y and LVxEF motifs) with PEX14; promoting translocation through the PEX13-PEX14 docking complex (PubMed:11978862, PubMed:15637057). Interacts with PEX7, promoting peroxisomal import of proteins containing a C-terminal PTS2-type peroxisomal targeting signal (PubMed:11978862, PubMed:15637057, PubMed:20130089). Interacts with LACS7 (PubMed:16256065).</text>
</comment>
<comment type="interaction">
    <interactant intactId="EBI-993861">
        <id>Q9FMA3</id>
    </interactant>
    <interactant intactId="EBI-993851">
        <id>Q8LKS5</id>
        <label>LACS7</label>
    </interactant>
    <organismsDiffer>false</organismsDiffer>
    <experiments>4</experiments>
</comment>
<comment type="interaction">
    <interactant intactId="EBI-993861">
        <id>Q9FMA3</id>
    </interactant>
    <interactant intactId="EBI-9536455">
        <id>Q9FXT6</id>
        <label>PEX14</label>
    </interactant>
    <organismsDiffer>false</organismsDiffer>
    <experiments>3</experiments>
</comment>
<comment type="subcellular location">
    <subcellularLocation>
        <location evidence="12">Cytoplasm</location>
        <location evidence="12">Cytosol</location>
    </subcellularLocation>
    <subcellularLocation>
        <location evidence="12">Peroxisome matrix</location>
    </subcellularLocation>
    <text evidence="1">Cycles between the cytosol and the peroxisome matrix (By similarity). Following binding to cargo proteins containing a PTS1 peroxisomal targeting signal in the cytosol, recruited to the docking complex, composed of PEX13 and PEX14, leading to translocation into the peroxisome matrix along with cargo proteins (By similarity). Export and recycling to the cytosol is initiated by binding to the PEX2-PEX10-PEX12 ligase complex via its unstructured N-terminus that inserts into the ligase pore and emerges in the cytosol (By similarity). Cys-13 of PEX5 is then monoubiquitinated, promoting its extraction from peroxisomal membrane by the PEX1-PEX6 AAA ATPase complex (By similarity). Extraction is accompanied by unfolding of the TPR repeats and release of bound cargo in the peroxisome matrix (By similarity). The TPR repeats refold in the cytosol and ubiquitination is removed by deubiquitinating enzymes, resetting PEX5 for a subsequent import cycle (By similarity).</text>
</comment>
<comment type="tissue specificity">
    <text evidence="7">Expressed in flowers, siliques, leaves and roots.</text>
</comment>
<comment type="developmental stage">
    <text evidence="6 7 16">Expressed at the early stage of germination and during the conversion of glyoxysomes to peroxisomes. Accumulates at high levels in seedlings and at lower levels as plants mature.</text>
</comment>
<comment type="induction">
    <text evidence="6 16">Up-regulated by hydrogen peroxide, the absence of sucrose and by dark versus light conditions.</text>
</comment>
<comment type="domain">
    <text evidence="1">The TPR repeats mediate interaction with proteins containing a C-terminal PTS1-type tripeptide peroxisomal targeting signal (SKL-type).</text>
</comment>
<comment type="domain">
    <text evidence="1">The WxxxF/Y motifs mediate interaction with PEX14, promoting association with the PEX13-PEX14 docking complex.</text>
</comment>
<comment type="domain">
    <text evidence="1">The amphipathic helix 1 and 2 (AH1 and AH2, respectively) are required for PEX5 retrotranslocation and recycling. AH2 mediates interaction with lumenal side of the PEX2-PEX10-PEX12 ligase complex, while AH1 is required for extraction from peroxisomal membrane by the PEX1-PEX6 AAA ATPase complex.</text>
</comment>
<comment type="PTM">
    <text evidence="1 2">Monoubiquitinated at Cys-13 by PEX2 during PEX5 passage through the retrotranslocation channel (By similarity). Cys-13 monoubiquitination acts as a recognition signal for the PEX1-PEX6 complex and is required for PEX5 extraction and export from peroxisomes (By similarity). When PEX5 recycling is compromised, polyubiquitinated by PEX10 during its passage through the retrotranslocation channel, leading to its degradation (By similarity).</text>
</comment>
<comment type="disruption phenotype">
    <text evidence="11">Peroxisome-defective phenotype including an absolute requirement for sucrose during early development, high seedling lethality, and delayed development.</text>
</comment>
<comment type="miscellaneous">
    <text evidence="15">PEX5 stability in light-grown seedlings depends on PEX7.</text>
</comment>
<comment type="similarity">
    <text evidence="17">Belongs to the peroxisomal targeting signal receptor family.</text>
</comment>
<protein>
    <recommendedName>
        <fullName>Peroxisome biogenesis protein 5</fullName>
    </recommendedName>
    <alternativeName>
        <fullName>Peroxin-5</fullName>
        <shortName>AtPEX5</shortName>
    </alternativeName>
    <alternativeName>
        <fullName>Peroxisomal targeting signal type 1 receptor</fullName>
    </alternativeName>
    <alternativeName>
        <fullName>Pex5p</fullName>
    </alternativeName>
</protein>
<organism>
    <name type="scientific">Arabidopsis thaliana</name>
    <name type="common">Mouse-ear cress</name>
    <dbReference type="NCBI Taxonomy" id="3702"/>
    <lineage>
        <taxon>Eukaryota</taxon>
        <taxon>Viridiplantae</taxon>
        <taxon>Streptophyta</taxon>
        <taxon>Embryophyta</taxon>
        <taxon>Tracheophyta</taxon>
        <taxon>Spermatophyta</taxon>
        <taxon>Magnoliopsida</taxon>
        <taxon>eudicotyledons</taxon>
        <taxon>Gunneridae</taxon>
        <taxon>Pentapetalae</taxon>
        <taxon>rosids</taxon>
        <taxon>malvids</taxon>
        <taxon>Brassicales</taxon>
        <taxon>Brassicaceae</taxon>
        <taxon>Camelineae</taxon>
        <taxon>Arabidopsis</taxon>
    </lineage>
</organism>
<evidence type="ECO:0000250" key="1">
    <source>
        <dbReference type="UniProtKB" id="A0A1L8FDW4"/>
    </source>
</evidence>
<evidence type="ECO:0000250" key="2">
    <source>
        <dbReference type="UniProtKB" id="P35056"/>
    </source>
</evidence>
<evidence type="ECO:0000250" key="3">
    <source>
        <dbReference type="UniProtKB" id="P50542"/>
    </source>
</evidence>
<evidence type="ECO:0000256" key="4">
    <source>
        <dbReference type="SAM" id="MobiDB-lite"/>
    </source>
</evidence>
<evidence type="ECO:0000269" key="5">
    <source>
    </source>
</evidence>
<evidence type="ECO:0000269" key="6">
    <source>
    </source>
</evidence>
<evidence type="ECO:0000269" key="7">
    <source>
    </source>
</evidence>
<evidence type="ECO:0000269" key="8">
    <source>
    </source>
</evidence>
<evidence type="ECO:0000269" key="9">
    <source>
    </source>
</evidence>
<evidence type="ECO:0000269" key="10">
    <source>
    </source>
</evidence>
<evidence type="ECO:0000269" key="11">
    <source>
    </source>
</evidence>
<evidence type="ECO:0000269" key="12">
    <source>
    </source>
</evidence>
<evidence type="ECO:0000269" key="13">
    <source>
    </source>
</evidence>
<evidence type="ECO:0000269" key="14">
    <source>
    </source>
</evidence>
<evidence type="ECO:0000269" key="15">
    <source>
    </source>
</evidence>
<evidence type="ECO:0000269" key="16">
    <source>
    </source>
</evidence>
<evidence type="ECO:0000305" key="17"/>
<accession>Q9FMA3</accession>
<accession>O82467</accession>
<gene>
    <name type="primary">PEX5</name>
    <name type="ordered locus">At5g56290</name>
    <name type="ORF">MXK23.3</name>
</gene>